<name>Y627_BACTN</name>
<proteinExistence type="inferred from homology"/>
<gene>
    <name type="ordered locus">BT_0627</name>
</gene>
<sequence length="247" mass="28037">MGRAFEYRKAAKLKRWGHMAKTFTRLGKQIAIAVKAGGPEPENNPTLRSVIATCKRENMPKDNIERAIKNAMGKDQSDYKSMTYEGYGPHGIAVFVDTLTDNTTRTVADVRSVFNKFGGNLGTMGSLAFLFDHKCMFTFKIKDGMDMEELILDLIDYDVEDEYEQDDEEGTITIYGDPKSYAAIQKHLEECGFEDVGGDFTYIPNDLKEVTPEQRETLDKMIERLEEFDDVQTVYTNMKPEEGGNEE</sequence>
<keyword id="KW-0963">Cytoplasm</keyword>
<keyword id="KW-0238">DNA-binding</keyword>
<keyword id="KW-1185">Reference proteome</keyword>
<keyword id="KW-0804">Transcription</keyword>
<keyword id="KW-0805">Transcription regulation</keyword>
<dbReference type="EMBL" id="AE015928">
    <property type="protein sequence ID" value="AAO75734.1"/>
    <property type="molecule type" value="Genomic_DNA"/>
</dbReference>
<dbReference type="RefSeq" id="NP_809540.1">
    <property type="nucleotide sequence ID" value="NC_004663.1"/>
</dbReference>
<dbReference type="RefSeq" id="WP_008761252.1">
    <property type="nucleotide sequence ID" value="NC_004663.1"/>
</dbReference>
<dbReference type="SMR" id="Q8AA38"/>
<dbReference type="FunCoup" id="Q8AA38">
    <property type="interactions" value="378"/>
</dbReference>
<dbReference type="STRING" id="226186.BT_0627"/>
<dbReference type="PaxDb" id="226186-BT_0627"/>
<dbReference type="EnsemblBacteria" id="AAO75734">
    <property type="protein sequence ID" value="AAO75734"/>
    <property type="gene ID" value="BT_0627"/>
</dbReference>
<dbReference type="GeneID" id="60926587"/>
<dbReference type="KEGG" id="bth:BT_0627"/>
<dbReference type="PATRIC" id="fig|226186.12.peg.636"/>
<dbReference type="eggNOG" id="COG0217">
    <property type="taxonomic scope" value="Bacteria"/>
</dbReference>
<dbReference type="HOGENOM" id="CLU_062974_3_0_10"/>
<dbReference type="InParanoid" id="Q8AA38"/>
<dbReference type="OrthoDB" id="9781053at2"/>
<dbReference type="Proteomes" id="UP000001414">
    <property type="component" value="Chromosome"/>
</dbReference>
<dbReference type="GO" id="GO:0005829">
    <property type="term" value="C:cytosol"/>
    <property type="evidence" value="ECO:0000318"/>
    <property type="project" value="GO_Central"/>
</dbReference>
<dbReference type="GO" id="GO:0003677">
    <property type="term" value="F:DNA binding"/>
    <property type="evidence" value="ECO:0007669"/>
    <property type="project" value="UniProtKB-UniRule"/>
</dbReference>
<dbReference type="GO" id="GO:0006355">
    <property type="term" value="P:regulation of DNA-templated transcription"/>
    <property type="evidence" value="ECO:0007669"/>
    <property type="project" value="UniProtKB-UniRule"/>
</dbReference>
<dbReference type="FunFam" id="1.10.10.200:FF:000004">
    <property type="entry name" value="Probable transcriptional regulatory protein BSBG_02618"/>
    <property type="match status" value="1"/>
</dbReference>
<dbReference type="FunFam" id="3.30.70.980:FF:000013">
    <property type="entry name" value="Probable transcriptional regulatory protein SAMN02910431_03073"/>
    <property type="match status" value="1"/>
</dbReference>
<dbReference type="Gene3D" id="1.10.10.200">
    <property type="match status" value="1"/>
</dbReference>
<dbReference type="Gene3D" id="3.30.70.980">
    <property type="match status" value="2"/>
</dbReference>
<dbReference type="HAMAP" id="MF_00693">
    <property type="entry name" value="Transcrip_reg_TACO1"/>
    <property type="match status" value="1"/>
</dbReference>
<dbReference type="InterPro" id="IPR017856">
    <property type="entry name" value="Integrase-like_N"/>
</dbReference>
<dbReference type="InterPro" id="IPR048300">
    <property type="entry name" value="TACO1_YebC-like_2nd/3rd_dom"/>
</dbReference>
<dbReference type="InterPro" id="IPR049083">
    <property type="entry name" value="TACO1_YebC_N"/>
</dbReference>
<dbReference type="InterPro" id="IPR002876">
    <property type="entry name" value="Transcrip_reg_TACO1-like"/>
</dbReference>
<dbReference type="InterPro" id="IPR026564">
    <property type="entry name" value="Transcrip_reg_TACO1-like_dom3"/>
</dbReference>
<dbReference type="InterPro" id="IPR029072">
    <property type="entry name" value="YebC-like"/>
</dbReference>
<dbReference type="NCBIfam" id="NF009044">
    <property type="entry name" value="PRK12378.1"/>
    <property type="match status" value="1"/>
</dbReference>
<dbReference type="NCBIfam" id="TIGR01033">
    <property type="entry name" value="YebC/PmpR family DNA-binding transcriptional regulator"/>
    <property type="match status" value="1"/>
</dbReference>
<dbReference type="PANTHER" id="PTHR12532:SF6">
    <property type="entry name" value="TRANSCRIPTIONAL REGULATORY PROTEIN YEBC-RELATED"/>
    <property type="match status" value="1"/>
</dbReference>
<dbReference type="PANTHER" id="PTHR12532">
    <property type="entry name" value="TRANSLATIONAL ACTIVATOR OF CYTOCHROME C OXIDASE 1"/>
    <property type="match status" value="1"/>
</dbReference>
<dbReference type="Pfam" id="PF20772">
    <property type="entry name" value="TACO1_YebC_N"/>
    <property type="match status" value="1"/>
</dbReference>
<dbReference type="Pfam" id="PF01709">
    <property type="entry name" value="Transcrip_reg"/>
    <property type="match status" value="1"/>
</dbReference>
<dbReference type="SUPFAM" id="SSF75625">
    <property type="entry name" value="YebC-like"/>
    <property type="match status" value="1"/>
</dbReference>
<feature type="chain" id="PRO_0000175764" description="Probable transcriptional regulatory protein BT_0627">
    <location>
        <begin position="1"/>
        <end position="247"/>
    </location>
</feature>
<reference key="1">
    <citation type="journal article" date="2003" name="Science">
        <title>A genomic view of the human-Bacteroides thetaiotaomicron symbiosis.</title>
        <authorList>
            <person name="Xu J."/>
            <person name="Bjursell M.K."/>
            <person name="Himrod J."/>
            <person name="Deng S."/>
            <person name="Carmichael L.K."/>
            <person name="Chiang H.C."/>
            <person name="Hooper L.V."/>
            <person name="Gordon J.I."/>
        </authorList>
    </citation>
    <scope>NUCLEOTIDE SEQUENCE [LARGE SCALE GENOMIC DNA]</scope>
    <source>
        <strain>ATCC 29148 / DSM 2079 / JCM 5827 / CCUG 10774 / NCTC 10582 / VPI-5482 / E50</strain>
    </source>
</reference>
<accession>Q8AA38</accession>
<evidence type="ECO:0000255" key="1">
    <source>
        <dbReference type="HAMAP-Rule" id="MF_00693"/>
    </source>
</evidence>
<comment type="subcellular location">
    <subcellularLocation>
        <location evidence="1">Cytoplasm</location>
    </subcellularLocation>
</comment>
<comment type="similarity">
    <text evidence="1">Belongs to the TACO1 family.</text>
</comment>
<organism>
    <name type="scientific">Bacteroides thetaiotaomicron (strain ATCC 29148 / DSM 2079 / JCM 5827 / CCUG 10774 / NCTC 10582 / VPI-5482 / E50)</name>
    <dbReference type="NCBI Taxonomy" id="226186"/>
    <lineage>
        <taxon>Bacteria</taxon>
        <taxon>Pseudomonadati</taxon>
        <taxon>Bacteroidota</taxon>
        <taxon>Bacteroidia</taxon>
        <taxon>Bacteroidales</taxon>
        <taxon>Bacteroidaceae</taxon>
        <taxon>Bacteroides</taxon>
    </lineage>
</organism>
<protein>
    <recommendedName>
        <fullName evidence="1">Probable transcriptional regulatory protein BT_0627</fullName>
    </recommendedName>
</protein>